<dbReference type="EMBL" id="AE017220">
    <property type="protein sequence ID" value="AAX64418.1"/>
    <property type="molecule type" value="Genomic_DNA"/>
</dbReference>
<dbReference type="SMR" id="Q57S93"/>
<dbReference type="KEGG" id="sec:SCH_0512"/>
<dbReference type="HOGENOM" id="CLU_135723_3_1_6"/>
<dbReference type="Proteomes" id="UP000000538">
    <property type="component" value="Chromosome"/>
</dbReference>
<dbReference type="GO" id="GO:1990904">
    <property type="term" value="C:ribonucleoprotein complex"/>
    <property type="evidence" value="ECO:0007669"/>
    <property type="project" value="UniProtKB-KW"/>
</dbReference>
<dbReference type="GO" id="GO:0005840">
    <property type="term" value="C:ribosome"/>
    <property type="evidence" value="ECO:0007669"/>
    <property type="project" value="UniProtKB-KW"/>
</dbReference>
<dbReference type="GO" id="GO:0003735">
    <property type="term" value="F:structural constituent of ribosome"/>
    <property type="evidence" value="ECO:0007669"/>
    <property type="project" value="InterPro"/>
</dbReference>
<dbReference type="GO" id="GO:0006412">
    <property type="term" value="P:translation"/>
    <property type="evidence" value="ECO:0007669"/>
    <property type="project" value="UniProtKB-UniRule"/>
</dbReference>
<dbReference type="HAMAP" id="MF_00251">
    <property type="entry name" value="Ribosomal_bL36"/>
    <property type="match status" value="1"/>
</dbReference>
<dbReference type="InterPro" id="IPR000473">
    <property type="entry name" value="Ribosomal_bL36"/>
</dbReference>
<dbReference type="InterPro" id="IPR035977">
    <property type="entry name" value="Ribosomal_bL36_sp"/>
</dbReference>
<dbReference type="InterPro" id="IPR047621">
    <property type="entry name" value="Ribosomal_L36_bact"/>
</dbReference>
<dbReference type="NCBIfam" id="NF002021">
    <property type="entry name" value="PRK00831.1"/>
    <property type="match status" value="1"/>
</dbReference>
<dbReference type="NCBIfam" id="TIGR01022">
    <property type="entry name" value="rpmJ_bact"/>
    <property type="match status" value="1"/>
</dbReference>
<dbReference type="PANTHER" id="PTHR47781">
    <property type="entry name" value="50S RIBOSOMAL PROTEIN L36 2"/>
    <property type="match status" value="1"/>
</dbReference>
<dbReference type="PANTHER" id="PTHR47781:SF1">
    <property type="entry name" value="LARGE RIBOSOMAL SUBUNIT PROTEIN BL36B"/>
    <property type="match status" value="1"/>
</dbReference>
<dbReference type="Pfam" id="PF00444">
    <property type="entry name" value="Ribosomal_L36"/>
    <property type="match status" value="1"/>
</dbReference>
<dbReference type="SUPFAM" id="SSF57840">
    <property type="entry name" value="Ribosomal protein L36"/>
    <property type="match status" value="1"/>
</dbReference>
<dbReference type="PROSITE" id="PS00828">
    <property type="entry name" value="RIBOSOMAL_L36"/>
    <property type="match status" value="1"/>
</dbReference>
<sequence length="46" mass="5521">MQVLNSLRNAKQRHPDCQIVKRKGRLYVICKTNPRFKAVQGRKKRR</sequence>
<reference key="1">
    <citation type="journal article" date="2005" name="Nucleic Acids Res.">
        <title>The genome sequence of Salmonella enterica serovar Choleraesuis, a highly invasive and resistant zoonotic pathogen.</title>
        <authorList>
            <person name="Chiu C.-H."/>
            <person name="Tang P."/>
            <person name="Chu C."/>
            <person name="Hu S."/>
            <person name="Bao Q."/>
            <person name="Yu J."/>
            <person name="Chou Y.-Y."/>
            <person name="Wang H.-S."/>
            <person name="Lee Y.-S."/>
        </authorList>
    </citation>
    <scope>NUCLEOTIDE SEQUENCE [LARGE SCALE GENOMIC DNA]</scope>
    <source>
        <strain>SC-B67</strain>
    </source>
</reference>
<gene>
    <name evidence="1" type="primary">rpmJ2</name>
    <name type="ordered locus">SCH_0512</name>
</gene>
<accession>Q57S93</accession>
<name>RL362_SALCH</name>
<feature type="chain" id="PRO_0000344716" description="Large ribosomal subunit protein bL36B">
    <location>
        <begin position="1"/>
        <end position="46"/>
    </location>
</feature>
<organism>
    <name type="scientific">Salmonella choleraesuis (strain SC-B67)</name>
    <dbReference type="NCBI Taxonomy" id="321314"/>
    <lineage>
        <taxon>Bacteria</taxon>
        <taxon>Pseudomonadati</taxon>
        <taxon>Pseudomonadota</taxon>
        <taxon>Gammaproteobacteria</taxon>
        <taxon>Enterobacterales</taxon>
        <taxon>Enterobacteriaceae</taxon>
        <taxon>Salmonella</taxon>
    </lineage>
</organism>
<keyword id="KW-0687">Ribonucleoprotein</keyword>
<keyword id="KW-0689">Ribosomal protein</keyword>
<protein>
    <recommendedName>
        <fullName evidence="1">Large ribosomal subunit protein bL36B</fullName>
    </recommendedName>
    <alternativeName>
        <fullName evidence="2">50S ribosomal protein L36 2</fullName>
    </alternativeName>
</protein>
<comment type="similarity">
    <text evidence="1">Belongs to the bacterial ribosomal protein bL36 family.</text>
</comment>
<proteinExistence type="inferred from homology"/>
<evidence type="ECO:0000255" key="1">
    <source>
        <dbReference type="HAMAP-Rule" id="MF_00251"/>
    </source>
</evidence>
<evidence type="ECO:0000305" key="2"/>